<organism>
    <name type="scientific">Porphyromonas gingivalis (strain ATCC BAA-308 / W83)</name>
    <dbReference type="NCBI Taxonomy" id="242619"/>
    <lineage>
        <taxon>Bacteria</taxon>
        <taxon>Pseudomonadati</taxon>
        <taxon>Bacteroidota</taxon>
        <taxon>Bacteroidia</taxon>
        <taxon>Bacteroidales</taxon>
        <taxon>Porphyromonadaceae</taxon>
        <taxon>Porphyromonas</taxon>
    </lineage>
</organism>
<sequence>MKKTKFFLLGLAALAMTACNKDNEAEPVVETNATVSFIIKSGESRAVGDDLTDAKITKLTAMVYAGQVQEGIKTVEEDGGVLKVEGIPCKSGANRVLVVVANHNYELTGKSLNEVEALTTSLTAENQNAKNLIMTGKSAAFTIKPGSNHYGYPGGTASDNLVSAGTPLAVTRVHAGISFAGVEVNMATQYQNYYSFKPADAKIAALVAKKDSKIFGNSLVSNTNAYLYGVQTPAGLYTPDAAGETYELEASLNTNYAVGAGFYVLESKYDASNELRPTILCIYGKLLDKDGNPLTEPALTDAINAGFCDGDGTTYYPVLVNYDGNGYIYSGAITQGQNKIVRNNHYKISLNITGPGTNTPENPQPVQANLNVTCQVTPWVVVNQAATW</sequence>
<reference key="1">
    <citation type="journal article" date="2003" name="J. Bacteriol.">
        <title>Complete genome sequence of the oral pathogenic bacterium Porphyromonas gingivalis strain W83.</title>
        <authorList>
            <person name="Nelson K.E."/>
            <person name="Fleischmann R.D."/>
            <person name="DeBoy R.T."/>
            <person name="Paulsen I.T."/>
            <person name="Fouts D.E."/>
            <person name="Eisen J.A."/>
            <person name="Daugherty S.C."/>
            <person name="Dodson R.J."/>
            <person name="Durkin A.S."/>
            <person name="Gwinn M.L."/>
            <person name="Haft D.H."/>
            <person name="Kolonay J.F."/>
            <person name="Nelson W.C."/>
            <person name="Mason T.M."/>
            <person name="Tallon L."/>
            <person name="Gray J."/>
            <person name="Granger D."/>
            <person name="Tettelin H."/>
            <person name="Dong H."/>
            <person name="Galvin J.L."/>
            <person name="Duncan M.J."/>
            <person name="Dewhirst F.E."/>
            <person name="Fraser C.M."/>
        </authorList>
    </citation>
    <scope>NUCLEOTIDE SEQUENCE [LARGE SCALE GENOMIC DNA]</scope>
    <source>
        <strain>ATCC BAA-308 / W83</strain>
    </source>
</reference>
<reference key="2">
    <citation type="journal article" date="2013" name="Mol. Oral. Microbiol.">
        <title>Genetic and antigenic analyses of Porphyromonas gingivalis FimA fimbriae.</title>
        <authorList>
            <person name="Nagano K."/>
            <person name="Abiko Y."/>
            <person name="Yoshida Y."/>
            <person name="Yoshimura F."/>
        </authorList>
    </citation>
    <scope>IDENTIFICATION</scope>
    <scope>CLASSIFICATION INTO TYPE 4</scope>
    <scope>MISCELLANEOUS</scope>
    <source>
        <strain evidence="4">ATCC BAA-308 / W83</strain>
    </source>
</reference>
<reference evidence="8" key="3">
    <citation type="journal article" date="2016" name="Cell">
        <title>A distinct type of pilus from the human microbiome.</title>
        <authorList>
            <person name="Xu Q."/>
            <person name="Shoji M."/>
            <person name="Shibata S."/>
            <person name="Naito M."/>
            <person name="Sato K."/>
            <person name="Elsliger M.A."/>
            <person name="Grant J.C."/>
            <person name="Axelrod H.L."/>
            <person name="Chiu H.J."/>
            <person name="Farr C.L."/>
            <person name="Jaroszewski L."/>
            <person name="Knuth M.W."/>
            <person name="Deacon A.M."/>
            <person name="Godzik A."/>
            <person name="Lesley S.A."/>
            <person name="Curtis M.A."/>
            <person name="Nakayama K."/>
            <person name="Wilson I.A."/>
        </authorList>
    </citation>
    <scope>X-RAY CRYSTALLOGRAPHY (1.30 ANGSTROMS) OF 21-388</scope>
    <scope>SUBCELLULAR LOCATION</scope>
    <scope>FUNCTION</scope>
    <scope>SUBUNIT</scope>
    <scope>MUTAGENESIS OF TRP-379; 380-VAL--TRP-388 AND 386-ALA--TRP-388</scope>
    <source>
        <strain evidence="5">ATCC BAA-308 / W83</strain>
    </source>
</reference>
<name>FIMA_PORGI</name>
<evidence type="ECO:0000250" key="1">
    <source>
        <dbReference type="UniProtKB" id="B2RH54"/>
    </source>
</evidence>
<evidence type="ECO:0000255" key="2">
    <source>
        <dbReference type="PROSITE-ProRule" id="PRU00303"/>
    </source>
</evidence>
<evidence type="ECO:0000269" key="3">
    <source>
    </source>
</evidence>
<evidence type="ECO:0000303" key="4">
    <source>
    </source>
</evidence>
<evidence type="ECO:0000303" key="5">
    <source>
    </source>
</evidence>
<evidence type="ECO:0000305" key="6"/>
<evidence type="ECO:0000305" key="7">
    <source>
    </source>
</evidence>
<evidence type="ECO:0007744" key="8">
    <source>
        <dbReference type="PDB" id="4Q98"/>
    </source>
</evidence>
<evidence type="ECO:0007829" key="9">
    <source>
        <dbReference type="PDB" id="4Q98"/>
    </source>
</evidence>
<keyword id="KW-0002">3D-structure</keyword>
<keyword id="KW-0998">Cell outer membrane</keyword>
<keyword id="KW-0281">Fimbrium</keyword>
<keyword id="KW-0449">Lipoprotein</keyword>
<keyword id="KW-0472">Membrane</keyword>
<keyword id="KW-0564">Palmitate</keyword>
<keyword id="KW-1185">Reference proteome</keyword>
<keyword id="KW-0732">Signal</keyword>
<keyword id="KW-0843">Virulence</keyword>
<gene>
    <name type="primary">fimA</name>
    <name type="ordered locus">PG_2132</name>
</gene>
<dbReference type="EMBL" id="AE015924">
    <property type="protein sequence ID" value="AAQ67087.1"/>
    <property type="molecule type" value="Genomic_DNA"/>
</dbReference>
<dbReference type="RefSeq" id="WP_005873481.1">
    <property type="nucleotide sequence ID" value="NC_002950.2"/>
</dbReference>
<dbReference type="PDB" id="4Q98">
    <property type="method" value="X-ray"/>
    <property type="resolution" value="1.30 A"/>
    <property type="chains" value="A=21-388"/>
</dbReference>
<dbReference type="PDBsum" id="4Q98"/>
<dbReference type="SMR" id="P59914"/>
<dbReference type="STRING" id="242619.PG_2132"/>
<dbReference type="EnsemblBacteria" id="AAQ67087">
    <property type="protein sequence ID" value="AAQ67087"/>
    <property type="gene ID" value="PG_2132"/>
</dbReference>
<dbReference type="KEGG" id="pgi:PG_2132"/>
<dbReference type="HOGENOM" id="CLU_059924_0_0_10"/>
<dbReference type="EvolutionaryTrace" id="P59914"/>
<dbReference type="Proteomes" id="UP000000588">
    <property type="component" value="Chromosome"/>
</dbReference>
<dbReference type="GO" id="GO:0009279">
    <property type="term" value="C:cell outer membrane"/>
    <property type="evidence" value="ECO:0007669"/>
    <property type="project" value="UniProtKB-SubCell"/>
</dbReference>
<dbReference type="GO" id="GO:0009289">
    <property type="term" value="C:pilus"/>
    <property type="evidence" value="ECO:0000250"/>
    <property type="project" value="UniProtKB"/>
</dbReference>
<dbReference type="GO" id="GO:0005198">
    <property type="term" value="F:structural molecule activity"/>
    <property type="evidence" value="ECO:0007669"/>
    <property type="project" value="InterPro"/>
</dbReference>
<dbReference type="GO" id="GO:0007155">
    <property type="term" value="P:cell adhesion"/>
    <property type="evidence" value="ECO:0007669"/>
    <property type="project" value="InterPro"/>
</dbReference>
<dbReference type="FunFam" id="2.60.40.3690:FF:000001">
    <property type="entry name" value="Major fimbrium subunit FimA type-4"/>
    <property type="match status" value="1"/>
</dbReference>
<dbReference type="Gene3D" id="2.60.40.3690">
    <property type="match status" value="1"/>
</dbReference>
<dbReference type="InterPro" id="IPR053878">
    <property type="entry name" value="FimA_C"/>
</dbReference>
<dbReference type="InterPro" id="IPR029141">
    <property type="entry name" value="FimA_N"/>
</dbReference>
<dbReference type="InterPro" id="IPR008110">
    <property type="entry name" value="Fimbrillin"/>
</dbReference>
<dbReference type="Pfam" id="PF22492">
    <property type="entry name" value="FimA4_C"/>
    <property type="match status" value="1"/>
</dbReference>
<dbReference type="Pfam" id="PF06321">
    <property type="entry name" value="P_gingi_FimA"/>
    <property type="match status" value="1"/>
</dbReference>
<dbReference type="PRINTS" id="PR01737">
    <property type="entry name" value="FIMBRILLIN"/>
</dbReference>
<dbReference type="PROSITE" id="PS51257">
    <property type="entry name" value="PROKAR_LIPOPROTEIN"/>
    <property type="match status" value="1"/>
</dbReference>
<proteinExistence type="evidence at protein level"/>
<feature type="signal peptide" evidence="2">
    <location>
        <begin position="1"/>
        <end position="18"/>
    </location>
</feature>
<feature type="propeptide" id="PRO_0000009154" evidence="1">
    <location>
        <begin position="19"/>
        <end position="45"/>
    </location>
</feature>
<feature type="chain" id="PRO_0000009155" description="Major fimbrium subunit FimA type-4">
    <location>
        <begin position="46"/>
        <end position="388"/>
    </location>
</feature>
<feature type="region of interest" description="Important for oligomerization and fimbrium assembly" evidence="3">
    <location>
        <begin position="379"/>
        <end position="388"/>
    </location>
</feature>
<feature type="site" description="Cleavage; by gingipain" evidence="1">
    <location>
        <begin position="45"/>
        <end position="46"/>
    </location>
</feature>
<feature type="lipid moiety-binding region" description="N-palmitoyl cysteine" evidence="2">
    <location>
        <position position="19"/>
    </location>
</feature>
<feature type="lipid moiety-binding region" description="S-diacylglycerol cysteine" evidence="2">
    <location>
        <position position="19"/>
    </location>
</feature>
<feature type="mutagenesis site" description="Impairs oligomerization and fimbrium assembly." evidence="3">
    <original>W</original>
    <variation>A</variation>
    <location>
        <position position="379"/>
    </location>
</feature>
<feature type="mutagenesis site" description="Abolishes fimbrium assembly." evidence="3">
    <location>
        <begin position="380"/>
        <end position="388"/>
    </location>
</feature>
<feature type="mutagenesis site" description="Abolishes fimbrium assembly." evidence="3">
    <location>
        <begin position="386"/>
        <end position="388"/>
    </location>
</feature>
<feature type="strand" evidence="9">
    <location>
        <begin position="33"/>
        <end position="39"/>
    </location>
</feature>
<feature type="strand" evidence="9">
    <location>
        <begin position="57"/>
        <end position="65"/>
    </location>
</feature>
<feature type="strand" evidence="9">
    <location>
        <begin position="68"/>
        <end position="76"/>
    </location>
</feature>
<feature type="strand" evidence="9">
    <location>
        <begin position="83"/>
        <end position="89"/>
    </location>
</feature>
<feature type="strand" evidence="9">
    <location>
        <begin position="92"/>
        <end position="102"/>
    </location>
</feature>
<feature type="helix" evidence="9">
    <location>
        <begin position="112"/>
        <end position="116"/>
    </location>
</feature>
<feature type="strand" evidence="9">
    <location>
        <begin position="119"/>
        <end position="121"/>
    </location>
</feature>
<feature type="helix" evidence="9">
    <location>
        <begin position="124"/>
        <end position="128"/>
    </location>
</feature>
<feature type="strand" evidence="9">
    <location>
        <begin position="134"/>
        <end position="137"/>
    </location>
</feature>
<feature type="strand" evidence="9">
    <location>
        <begin position="141"/>
        <end position="143"/>
    </location>
</feature>
<feature type="strand" evidence="9">
    <location>
        <begin position="145"/>
        <end position="151"/>
    </location>
</feature>
<feature type="strand" evidence="9">
    <location>
        <begin position="159"/>
        <end position="163"/>
    </location>
</feature>
<feature type="strand" evidence="9">
    <location>
        <begin position="171"/>
        <end position="173"/>
    </location>
</feature>
<feature type="strand" evidence="9">
    <location>
        <begin position="175"/>
        <end position="184"/>
    </location>
</feature>
<feature type="helix" evidence="9">
    <location>
        <begin position="188"/>
        <end position="190"/>
    </location>
</feature>
<feature type="turn" evidence="9">
    <location>
        <begin position="191"/>
        <end position="193"/>
    </location>
</feature>
<feature type="helix" evidence="9">
    <location>
        <begin position="198"/>
        <end position="200"/>
    </location>
</feature>
<feature type="strand" evidence="9">
    <location>
        <begin position="202"/>
        <end position="218"/>
    </location>
</feature>
<feature type="strand" evidence="9">
    <location>
        <begin position="225"/>
        <end position="230"/>
    </location>
</feature>
<feature type="strand" evidence="9">
    <location>
        <begin position="245"/>
        <end position="248"/>
    </location>
</feature>
<feature type="helix" evidence="9">
    <location>
        <begin position="250"/>
        <end position="252"/>
    </location>
</feature>
<feature type="strand" evidence="9">
    <location>
        <begin position="253"/>
        <end position="255"/>
    </location>
</feature>
<feature type="strand" evidence="9">
    <location>
        <begin position="261"/>
        <end position="264"/>
    </location>
</feature>
<feature type="strand" evidence="9">
    <location>
        <begin position="271"/>
        <end position="274"/>
    </location>
</feature>
<feature type="strand" evidence="9">
    <location>
        <begin position="279"/>
        <end position="285"/>
    </location>
</feature>
<feature type="strand" evidence="9">
    <location>
        <begin position="291"/>
        <end position="293"/>
    </location>
</feature>
<feature type="helix" evidence="9">
    <location>
        <begin position="298"/>
        <end position="304"/>
    </location>
</feature>
<feature type="strand" evidence="9">
    <location>
        <begin position="313"/>
        <end position="319"/>
    </location>
</feature>
<feature type="strand" evidence="9">
    <location>
        <begin position="328"/>
        <end position="332"/>
    </location>
</feature>
<feature type="strand" evidence="9">
    <location>
        <begin position="338"/>
        <end position="340"/>
    </location>
</feature>
<feature type="strand" evidence="9">
    <location>
        <begin position="344"/>
        <end position="352"/>
    </location>
</feature>
<feature type="strand" evidence="9">
    <location>
        <begin position="369"/>
        <end position="378"/>
    </location>
</feature>
<protein>
    <recommendedName>
        <fullName evidence="6">Major fimbrium subunit FimA type-4</fullName>
    </recommendedName>
    <alternativeName>
        <fullName>Fimbrillin</fullName>
        <shortName>Fimbrilin</shortName>
    </alternativeName>
    <alternativeName>
        <fullName>Major fimbrial subunit protein type-4</fullName>
        <shortName evidence="5">FimA4</shortName>
    </alternativeName>
</protein>
<comment type="function">
    <text evidence="1 3">Structural subunit of the major fimbriae (PubMed:27062925). These long, filamentous pili are attached to the cell surface; they mediate biofilm formation, adhesion onto host cells and onto other bacteria that are part of the oral microbiome. They play an important role in the invasion of periodontal tissues. Fimbriae and their constituents are major virulence factors. FimA proteins from different strains have highly divergent sequences, and this has been used for classification. The sequence-based classification correlates with pathogenicity.</text>
</comment>
<comment type="subunit">
    <text evidence="1 3 6">Fimbriae are composed of a major, structural subunit (FimA) and the minor components FimC, FimD and FimE (By similarity). Head-to-tail oligomerization of FimA molecules mediates assembly of the fimbrium stalk, while the minor components probably form the fimbrium tip (Probable). Linear, head-to-tail oligomerization of FimA is mediated by a conformation change, facilitating the insertion of a C-terminal beta-strand into a groove in the N-terminal domain of the following subunit (PubMed:27062925). The anchoring subunit FimB limits fimbrium length and is important for solid fimbrium attachment to the outer membrane. In its absence, the major fimbriae become very long and are easily detached from the membrane (PubMed:27062925).</text>
</comment>
<comment type="subcellular location">
    <subcellularLocation>
        <location evidence="3">Fimbrium</location>
    </subcellularLocation>
    <subcellularLocation>
        <location evidence="1">Cell outer membrane</location>
    </subcellularLocation>
    <text evidence="1">Synthesized as palmitoylated precursor. The lipidated propeptide is removed during processing to the mature protein.</text>
</comment>
<comment type="PTM">
    <text evidence="1">Synthesized as palmitoylated precursor. Efficient export to the outer membrane and integration into fimbriae requires lipidation and subsequent proteolytic removal of the lipidated propeptide.</text>
</comment>
<comment type="miscellaneous">
    <text evidence="7">Strain ATCC BAA-308 / W83 seems to lack fimbriae, probably due to very low expression of the fimA gene.</text>
</comment>
<comment type="miscellaneous">
    <text evidence="6">The name (major fimbrium subunit) does not indicate the abundance of the protein, but is derived from the greater length of the major fimbriae. In strain ATCC 33277 and strain 381, major fimbriae are 300 - 1600 nM in length and about 5 nm in diameter. In contrast, minor fimbriae are only about 80 - 120 nm long. This length difference is observed only in a small number of strains, including strain ATCC 33277 and strain 381, and is due to a loss of function mutation in FimB, a protein that restricts fimbrial length in other strains.</text>
</comment>
<comment type="similarity">
    <text evidence="6">Belongs to the bacteroidetes fimbrillin superfamily. FimA/Mfa1 family.</text>
</comment>
<accession>P59914</accession>